<comment type="function">
    <text evidence="2">Destroys radicals which are normally produced within the cells and which are toxic to biological systems.</text>
</comment>
<comment type="catalytic activity">
    <reaction evidence="2">
        <text>2 Fe(II)-[cytochrome c] + H2O2 + 2 H(+) = 2 Fe(III)-[cytochrome c] + 2 H2O</text>
        <dbReference type="Rhea" id="RHEA:16581"/>
        <dbReference type="Rhea" id="RHEA-COMP:10350"/>
        <dbReference type="Rhea" id="RHEA-COMP:14399"/>
        <dbReference type="ChEBI" id="CHEBI:15377"/>
        <dbReference type="ChEBI" id="CHEBI:15378"/>
        <dbReference type="ChEBI" id="CHEBI:16240"/>
        <dbReference type="ChEBI" id="CHEBI:29033"/>
        <dbReference type="ChEBI" id="CHEBI:29034"/>
        <dbReference type="EC" id="1.11.1.5"/>
    </reaction>
</comment>
<comment type="cofactor">
    <cofactor evidence="4">
        <name>heme b</name>
        <dbReference type="ChEBI" id="CHEBI:60344"/>
    </cofactor>
    <text evidence="4">Binds 1 heme b (iron(II)-protoporphyrin IX) group per subunit.</text>
</comment>
<comment type="subunit">
    <text evidence="2">Forms a one-to-one complex with cytochrome c.</text>
</comment>
<comment type="subcellular location">
    <subcellularLocation>
        <location evidence="2">Mitochondrion matrix</location>
    </subcellularLocation>
    <subcellularLocation>
        <location evidence="2">Mitochondrion intermembrane space</location>
    </subcellularLocation>
</comment>
<comment type="similarity">
    <text evidence="6">Belongs to the peroxidase family. Cytochrome c peroxidase subfamily.</text>
</comment>
<proteinExistence type="inferred from homology"/>
<evidence type="ECO:0000250" key="1"/>
<evidence type="ECO:0000250" key="2">
    <source>
        <dbReference type="UniProtKB" id="P00431"/>
    </source>
</evidence>
<evidence type="ECO:0000255" key="3"/>
<evidence type="ECO:0000255" key="4">
    <source>
        <dbReference type="PROSITE-ProRule" id="PRU00297"/>
    </source>
</evidence>
<evidence type="ECO:0000255" key="5">
    <source>
        <dbReference type="PROSITE-ProRule" id="PRU10012"/>
    </source>
</evidence>
<evidence type="ECO:0000305" key="6"/>
<reference key="1">
    <citation type="journal article" date="2005" name="Science">
        <title>The genome of the basidiomycetous yeast and human pathogen Cryptococcus neoformans.</title>
        <authorList>
            <person name="Loftus B.J."/>
            <person name="Fung E."/>
            <person name="Roncaglia P."/>
            <person name="Rowley D."/>
            <person name="Amedeo P."/>
            <person name="Bruno D."/>
            <person name="Vamathevan J."/>
            <person name="Miranda M."/>
            <person name="Anderson I.J."/>
            <person name="Fraser J.A."/>
            <person name="Allen J.E."/>
            <person name="Bosdet I.E."/>
            <person name="Brent M.R."/>
            <person name="Chiu R."/>
            <person name="Doering T.L."/>
            <person name="Donlin M.J."/>
            <person name="D'Souza C.A."/>
            <person name="Fox D.S."/>
            <person name="Grinberg V."/>
            <person name="Fu J."/>
            <person name="Fukushima M."/>
            <person name="Haas B.J."/>
            <person name="Huang J.C."/>
            <person name="Janbon G."/>
            <person name="Jones S.J.M."/>
            <person name="Koo H.L."/>
            <person name="Krzywinski M.I."/>
            <person name="Kwon-Chung K.J."/>
            <person name="Lengeler K.B."/>
            <person name="Maiti R."/>
            <person name="Marra M.A."/>
            <person name="Marra R.E."/>
            <person name="Mathewson C.A."/>
            <person name="Mitchell T.G."/>
            <person name="Pertea M."/>
            <person name="Riggs F.R."/>
            <person name="Salzberg S.L."/>
            <person name="Schein J.E."/>
            <person name="Shvartsbeyn A."/>
            <person name="Shin H."/>
            <person name="Shumway M."/>
            <person name="Specht C.A."/>
            <person name="Suh B.B."/>
            <person name="Tenney A."/>
            <person name="Utterback T.R."/>
            <person name="Wickes B.L."/>
            <person name="Wortman J.R."/>
            <person name="Wye N.H."/>
            <person name="Kronstad J.W."/>
            <person name="Lodge J.K."/>
            <person name="Heitman J."/>
            <person name="Davis R.W."/>
            <person name="Fraser C.M."/>
            <person name="Hyman R.W."/>
        </authorList>
    </citation>
    <scope>NUCLEOTIDE SEQUENCE [LARGE SCALE GENOMIC DNA]</scope>
    <source>
        <strain>JEC21 / ATCC MYA-565</strain>
    </source>
</reference>
<feature type="transit peptide" description="Mitochondrion" evidence="3">
    <location>
        <begin position="1"/>
        <end position="17"/>
    </location>
</feature>
<feature type="chain" id="PRO_0000045289" description="Cytochrome c peroxidase, mitochondrial">
    <location>
        <begin position="18"/>
        <end position="377"/>
    </location>
</feature>
<feature type="active site" description="Proton acceptor" evidence="4 5">
    <location>
        <position position="138"/>
    </location>
</feature>
<feature type="active site" description="Tryptophan radical intermediate" evidence="1">
    <location>
        <position position="277"/>
    </location>
</feature>
<feature type="binding site" description="axial binding residue">
    <location>
        <position position="261"/>
    </location>
    <ligand>
        <name>heme b</name>
        <dbReference type="ChEBI" id="CHEBI:60344"/>
    </ligand>
    <ligandPart>
        <name>Fe</name>
        <dbReference type="ChEBI" id="CHEBI:18248"/>
    </ligandPart>
</feature>
<feature type="site" description="Transition state stabilizer" evidence="4">
    <location>
        <position position="134"/>
    </location>
</feature>
<keyword id="KW-0349">Heme</keyword>
<keyword id="KW-0408">Iron</keyword>
<keyword id="KW-0479">Metal-binding</keyword>
<keyword id="KW-0496">Mitochondrion</keyword>
<keyword id="KW-0560">Oxidoreductase</keyword>
<keyword id="KW-0575">Peroxidase</keyword>
<keyword id="KW-1185">Reference proteome</keyword>
<keyword id="KW-0809">Transit peptide</keyword>
<gene>
    <name type="primary">CCP1</name>
    <name type="ordered locus">CND02630</name>
</gene>
<organism>
    <name type="scientific">Cryptococcus neoformans var. neoformans serotype D (strain JEC21 / ATCC MYA-565)</name>
    <name type="common">Filobasidiella neoformans</name>
    <dbReference type="NCBI Taxonomy" id="214684"/>
    <lineage>
        <taxon>Eukaryota</taxon>
        <taxon>Fungi</taxon>
        <taxon>Dikarya</taxon>
        <taxon>Basidiomycota</taxon>
        <taxon>Agaricomycotina</taxon>
        <taxon>Tremellomycetes</taxon>
        <taxon>Tremellales</taxon>
        <taxon>Cryptococcaceae</taxon>
        <taxon>Cryptococcus</taxon>
        <taxon>Cryptococcus neoformans species complex</taxon>
    </lineage>
</organism>
<sequence length="377" mass="42112">MSFRAPNLIRSAAGRRASQTLNLRSQVIRRRFATEGGPEITKPSSPRSSNTRYLLAGVGIAAVGAAYYFYGTGRTAHDSANKADTVVRGAVATVEAKTGLRRGKDEYQKVYNRIAETLEKEGYDDGSLAPVLLRLAWHSSGTYNKEDGTGGSNFATMRFKPEAEHSANNGLHVAREHMEKIKQEFPWISYGDLWTLGGVCAVQESGGPTIPWRPGRIDGFEAQVTPDGRLPDASQAQDHLRFIFNRMGFNDQEIVALSGAHAMGRCHTNRSGFEGPWTFSPVTFSNQYFALLRDEPWQWKKWTGPAQYEDKNTKTLMMLPTDMALLKDKSFKKYVDIYADNEEKFFSDFAKAFSKLIELGVPERQWAGEPWTLGTSD</sequence>
<protein>
    <recommendedName>
        <fullName>Cytochrome c peroxidase, mitochondrial</fullName>
        <shortName>CCP</shortName>
        <ecNumber evidence="2">1.11.1.5</ecNumber>
    </recommendedName>
</protein>
<accession>P0CP54</accession>
<accession>Q55TT2</accession>
<accession>Q5KIK5</accession>
<name>CCPR_CRYNJ</name>
<dbReference type="EC" id="1.11.1.5" evidence="2"/>
<dbReference type="EMBL" id="AE017344">
    <property type="protein sequence ID" value="AAW42936.1"/>
    <property type="molecule type" value="Genomic_DNA"/>
</dbReference>
<dbReference type="RefSeq" id="XP_570243.1">
    <property type="nucleotide sequence ID" value="XM_570243.1"/>
</dbReference>
<dbReference type="SMR" id="P0CP54"/>
<dbReference type="STRING" id="214684.P0CP54"/>
<dbReference type="PaxDb" id="214684-P0CP54"/>
<dbReference type="EnsemblFungi" id="AAW42936">
    <property type="protein sequence ID" value="AAW42936"/>
    <property type="gene ID" value="CND02630"/>
</dbReference>
<dbReference type="GeneID" id="3257130"/>
<dbReference type="KEGG" id="cne:CND02630"/>
<dbReference type="VEuPathDB" id="FungiDB:CND02630"/>
<dbReference type="eggNOG" id="ENOG502QR1E">
    <property type="taxonomic scope" value="Eukaryota"/>
</dbReference>
<dbReference type="HOGENOM" id="CLU_036959_1_1_1"/>
<dbReference type="InParanoid" id="P0CP54"/>
<dbReference type="OMA" id="QRKWNGP"/>
<dbReference type="OrthoDB" id="2859658at2759"/>
<dbReference type="Proteomes" id="UP000002149">
    <property type="component" value="Chromosome 4"/>
</dbReference>
<dbReference type="GO" id="GO:0005758">
    <property type="term" value="C:mitochondrial intermembrane space"/>
    <property type="evidence" value="ECO:0007669"/>
    <property type="project" value="UniProtKB-SubCell"/>
</dbReference>
<dbReference type="GO" id="GO:0005759">
    <property type="term" value="C:mitochondrial matrix"/>
    <property type="evidence" value="ECO:0007669"/>
    <property type="project" value="UniProtKB-SubCell"/>
</dbReference>
<dbReference type="GO" id="GO:0004130">
    <property type="term" value="F:cytochrome-c peroxidase activity"/>
    <property type="evidence" value="ECO:0007669"/>
    <property type="project" value="UniProtKB-EC"/>
</dbReference>
<dbReference type="GO" id="GO:0020037">
    <property type="term" value="F:heme binding"/>
    <property type="evidence" value="ECO:0007669"/>
    <property type="project" value="InterPro"/>
</dbReference>
<dbReference type="GO" id="GO:0046872">
    <property type="term" value="F:metal ion binding"/>
    <property type="evidence" value="ECO:0007669"/>
    <property type="project" value="UniProtKB-KW"/>
</dbReference>
<dbReference type="GO" id="GO:0004601">
    <property type="term" value="F:peroxidase activity"/>
    <property type="evidence" value="ECO:0000318"/>
    <property type="project" value="GO_Central"/>
</dbReference>
<dbReference type="GO" id="GO:0034599">
    <property type="term" value="P:cellular response to oxidative stress"/>
    <property type="evidence" value="ECO:0000318"/>
    <property type="project" value="GO_Central"/>
</dbReference>
<dbReference type="GO" id="GO:0042744">
    <property type="term" value="P:hydrogen peroxide catabolic process"/>
    <property type="evidence" value="ECO:0000318"/>
    <property type="project" value="GO_Central"/>
</dbReference>
<dbReference type="GO" id="GO:0000302">
    <property type="term" value="P:response to reactive oxygen species"/>
    <property type="evidence" value="ECO:0000318"/>
    <property type="project" value="GO_Central"/>
</dbReference>
<dbReference type="CDD" id="cd00691">
    <property type="entry name" value="ascorbate_peroxidase"/>
    <property type="match status" value="1"/>
</dbReference>
<dbReference type="FunFam" id="1.10.420.10:FF:000009">
    <property type="entry name" value="Ascorbate peroxidase"/>
    <property type="match status" value="1"/>
</dbReference>
<dbReference type="FunFam" id="1.10.520.10:FF:000005">
    <property type="entry name" value="Cytochrome c peroxidase"/>
    <property type="match status" value="1"/>
</dbReference>
<dbReference type="Gene3D" id="1.10.520.10">
    <property type="match status" value="1"/>
</dbReference>
<dbReference type="Gene3D" id="1.10.420.10">
    <property type="entry name" value="Peroxidase, domain 2"/>
    <property type="match status" value="1"/>
</dbReference>
<dbReference type="InterPro" id="IPR044831">
    <property type="entry name" value="Ccp1-like"/>
</dbReference>
<dbReference type="InterPro" id="IPR002016">
    <property type="entry name" value="Haem_peroxidase"/>
</dbReference>
<dbReference type="InterPro" id="IPR010255">
    <property type="entry name" value="Haem_peroxidase_sf"/>
</dbReference>
<dbReference type="InterPro" id="IPR002207">
    <property type="entry name" value="Peroxidase_I"/>
</dbReference>
<dbReference type="InterPro" id="IPR019794">
    <property type="entry name" value="Peroxidases_AS"/>
</dbReference>
<dbReference type="InterPro" id="IPR019793">
    <property type="entry name" value="Peroxidases_heam-ligand_BS"/>
</dbReference>
<dbReference type="PANTHER" id="PTHR31356:SF58">
    <property type="entry name" value="CYTOCHROME C PEROXIDASE, MITOCHONDRIAL"/>
    <property type="match status" value="1"/>
</dbReference>
<dbReference type="PANTHER" id="PTHR31356">
    <property type="entry name" value="THYLAKOID LUMENAL 29 KDA PROTEIN, CHLOROPLASTIC-RELATED"/>
    <property type="match status" value="1"/>
</dbReference>
<dbReference type="Pfam" id="PF00141">
    <property type="entry name" value="peroxidase"/>
    <property type="match status" value="1"/>
</dbReference>
<dbReference type="PRINTS" id="PR00459">
    <property type="entry name" value="ASPEROXIDASE"/>
</dbReference>
<dbReference type="PRINTS" id="PR00458">
    <property type="entry name" value="PEROXIDASE"/>
</dbReference>
<dbReference type="SUPFAM" id="SSF48113">
    <property type="entry name" value="Heme-dependent peroxidases"/>
    <property type="match status" value="1"/>
</dbReference>
<dbReference type="PROSITE" id="PS00435">
    <property type="entry name" value="PEROXIDASE_1"/>
    <property type="match status" value="1"/>
</dbReference>
<dbReference type="PROSITE" id="PS00436">
    <property type="entry name" value="PEROXIDASE_2"/>
    <property type="match status" value="1"/>
</dbReference>
<dbReference type="PROSITE" id="PS50873">
    <property type="entry name" value="PEROXIDASE_4"/>
    <property type="match status" value="1"/>
</dbReference>